<comment type="function">
    <text evidence="2">Catalyzes specifically the NADPH-dependent reduction of coenzyme A disulfide.</text>
</comment>
<comment type="catalytic activity">
    <reaction evidence="2">
        <text>NADP(+) + 2 CoA = CoA-disulfide + NADPH + H(+)</text>
        <dbReference type="Rhea" id="RHEA:14705"/>
        <dbReference type="ChEBI" id="CHEBI:15378"/>
        <dbReference type="ChEBI" id="CHEBI:57287"/>
        <dbReference type="ChEBI" id="CHEBI:57783"/>
        <dbReference type="ChEBI" id="CHEBI:58349"/>
        <dbReference type="ChEBI" id="CHEBI:62209"/>
        <dbReference type="EC" id="1.8.1.14"/>
    </reaction>
</comment>
<comment type="cofactor">
    <cofactor evidence="2">
        <name>FAD</name>
        <dbReference type="ChEBI" id="CHEBI:57692"/>
    </cofactor>
    <text evidence="2">Binds 1 FAD per subunit.</text>
</comment>
<comment type="subunit">
    <text evidence="2">Homodimer.</text>
</comment>
<comment type="domain">
    <text evidence="2">Contains 2 FAD binding domains and a single NADPH binding domain.</text>
</comment>
<comment type="miscellaneous">
    <text evidence="2">Reduction of disulfides occurs by a thiol-disulfide exchange reaction, but involves only a single catalytic cysteine residue that forms a stable mixed disulfide with CoA during catalysis.</text>
</comment>
<comment type="similarity">
    <text evidence="2">Belongs to the class-III pyridine nucleotide-disulfide oxidoreductase family.</text>
</comment>
<gene>
    <name evidence="2" type="primary">cdr</name>
    <name type="ordered locus">SAR0933</name>
</gene>
<protein>
    <recommendedName>
        <fullName evidence="2">Coenzyme A disulfide reductase</fullName>
        <shortName evidence="2">CoA-disulfide reductase</shortName>
        <shortName evidence="2">CoADR</shortName>
        <ecNumber evidence="2">1.8.1.14</ecNumber>
    </recommendedName>
</protein>
<evidence type="ECO:0000250" key="1"/>
<evidence type="ECO:0000255" key="2">
    <source>
        <dbReference type="HAMAP-Rule" id="MF_01608"/>
    </source>
</evidence>
<sequence>MPKIVVVGAVAGGATCASQIRRLDKESDIIIFEKDRDMSFANCALPYVIGEVVEDRKYALAYTPEKFYDRKQITVKTYHEVIAINDERQTVSVLNRKTNEQFEESYDKLILSPGASANSLGFESDITFTLRNLEDTDAIDQFIKANQVDKVLVVGAGYVSLEVLENLYERGLHPTLIHRSDKINKLMDADMNQPILDELDKREIPYRLNEEIDAINGNEITFKSGKVEHYDMIIEGVGTHPNSKFIESSNIKLDRKGFIPVNDKFETNVPNIYVIGDIATSHYRHVDLPASVPLAWGAHRAASIVAEQIAGNDTIEFKGFLGNNIVKFFDYTFASVGVKPNELKQFDYKMVEVTQGAHANYYPGNSPLHLRVYYDTSNRQILRAAAVGKEGADKRIDVLSMAMMNQLTVDELTEFEVAYAPPYSHPKDLINMIGYKAK</sequence>
<reference key="1">
    <citation type="journal article" date="2004" name="Proc. Natl. Acad. Sci. U.S.A.">
        <title>Complete genomes of two clinical Staphylococcus aureus strains: evidence for the rapid evolution of virulence and drug resistance.</title>
        <authorList>
            <person name="Holden M.T.G."/>
            <person name="Feil E.J."/>
            <person name="Lindsay J.A."/>
            <person name="Peacock S.J."/>
            <person name="Day N.P.J."/>
            <person name="Enright M.C."/>
            <person name="Foster T.J."/>
            <person name="Moore C.E."/>
            <person name="Hurst L."/>
            <person name="Atkin R."/>
            <person name="Barron A."/>
            <person name="Bason N."/>
            <person name="Bentley S.D."/>
            <person name="Chillingworth C."/>
            <person name="Chillingworth T."/>
            <person name="Churcher C."/>
            <person name="Clark L."/>
            <person name="Corton C."/>
            <person name="Cronin A."/>
            <person name="Doggett J."/>
            <person name="Dowd L."/>
            <person name="Feltwell T."/>
            <person name="Hance Z."/>
            <person name="Harris B."/>
            <person name="Hauser H."/>
            <person name="Holroyd S."/>
            <person name="Jagels K."/>
            <person name="James K.D."/>
            <person name="Lennard N."/>
            <person name="Line A."/>
            <person name="Mayes R."/>
            <person name="Moule S."/>
            <person name="Mungall K."/>
            <person name="Ormond D."/>
            <person name="Quail M.A."/>
            <person name="Rabbinowitsch E."/>
            <person name="Rutherford K.M."/>
            <person name="Sanders M."/>
            <person name="Sharp S."/>
            <person name="Simmonds M."/>
            <person name="Stevens K."/>
            <person name="Whitehead S."/>
            <person name="Barrell B.G."/>
            <person name="Spratt B.G."/>
            <person name="Parkhill J."/>
        </authorList>
    </citation>
    <scope>NUCLEOTIDE SEQUENCE [LARGE SCALE GENOMIC DNA]</scope>
    <source>
        <strain>MRSA252</strain>
    </source>
</reference>
<organism>
    <name type="scientific">Staphylococcus aureus (strain MRSA252)</name>
    <dbReference type="NCBI Taxonomy" id="282458"/>
    <lineage>
        <taxon>Bacteria</taxon>
        <taxon>Bacillati</taxon>
        <taxon>Bacillota</taxon>
        <taxon>Bacilli</taxon>
        <taxon>Bacillales</taxon>
        <taxon>Staphylococcaceae</taxon>
        <taxon>Staphylococcus</taxon>
    </lineage>
</organism>
<keyword id="KW-0274">FAD</keyword>
<keyword id="KW-0285">Flavoprotein</keyword>
<keyword id="KW-0521">NADP</keyword>
<keyword id="KW-0560">Oxidoreductase</keyword>
<keyword id="KW-0676">Redox-active center</keyword>
<dbReference type="EC" id="1.8.1.14" evidence="2"/>
<dbReference type="EMBL" id="BX571856">
    <property type="protein sequence ID" value="CAG39939.1"/>
    <property type="molecule type" value="Genomic_DNA"/>
</dbReference>
<dbReference type="RefSeq" id="WP_001124494.1">
    <property type="nucleotide sequence ID" value="NC_002952.2"/>
</dbReference>
<dbReference type="SMR" id="Q6GIB7"/>
<dbReference type="KEGG" id="sar:SAR0933"/>
<dbReference type="HOGENOM" id="CLU_003291_1_3_9"/>
<dbReference type="Proteomes" id="UP000000596">
    <property type="component" value="Chromosome"/>
</dbReference>
<dbReference type="GO" id="GO:0050451">
    <property type="term" value="F:CoA-disulfide reductase (NADPH) activity"/>
    <property type="evidence" value="ECO:0007669"/>
    <property type="project" value="UniProtKB-UniRule"/>
</dbReference>
<dbReference type="GO" id="GO:0050660">
    <property type="term" value="F:flavin adenine dinucleotide binding"/>
    <property type="evidence" value="ECO:0007669"/>
    <property type="project" value="UniProtKB-UniRule"/>
</dbReference>
<dbReference type="GO" id="GO:0050661">
    <property type="term" value="F:NADP binding"/>
    <property type="evidence" value="ECO:0007669"/>
    <property type="project" value="UniProtKB-UniRule"/>
</dbReference>
<dbReference type="GO" id="GO:0003756">
    <property type="term" value="F:protein disulfide isomerase activity"/>
    <property type="evidence" value="ECO:0007669"/>
    <property type="project" value="UniProtKB-UniRule"/>
</dbReference>
<dbReference type="Gene3D" id="3.30.390.30">
    <property type="match status" value="1"/>
</dbReference>
<dbReference type="Gene3D" id="3.50.50.60">
    <property type="entry name" value="FAD/NAD(P)-binding domain"/>
    <property type="match status" value="2"/>
</dbReference>
<dbReference type="HAMAP" id="MF_01608">
    <property type="entry name" value="CoA_diS_reduct"/>
    <property type="match status" value="1"/>
</dbReference>
<dbReference type="InterPro" id="IPR017758">
    <property type="entry name" value="CoA_disulphide_reductase"/>
</dbReference>
<dbReference type="InterPro" id="IPR023536">
    <property type="entry name" value="CoA_disulphide_reductase_staph"/>
</dbReference>
<dbReference type="InterPro" id="IPR050260">
    <property type="entry name" value="FAD-bd_OxRdtase"/>
</dbReference>
<dbReference type="InterPro" id="IPR036188">
    <property type="entry name" value="FAD/NAD-bd_sf"/>
</dbReference>
<dbReference type="InterPro" id="IPR023753">
    <property type="entry name" value="FAD/NAD-binding_dom"/>
</dbReference>
<dbReference type="InterPro" id="IPR016156">
    <property type="entry name" value="FAD/NAD-linked_Rdtase_dimer_sf"/>
</dbReference>
<dbReference type="InterPro" id="IPR004099">
    <property type="entry name" value="Pyr_nucl-diS_OxRdtase_dimer"/>
</dbReference>
<dbReference type="NCBIfam" id="TIGR03385">
    <property type="entry name" value="CoA_CoA_reduc"/>
    <property type="match status" value="1"/>
</dbReference>
<dbReference type="NCBIfam" id="NF010037">
    <property type="entry name" value="PRK13512.1"/>
    <property type="match status" value="1"/>
</dbReference>
<dbReference type="PANTHER" id="PTHR43429:SF1">
    <property type="entry name" value="NAD(P)H SULFUR OXIDOREDUCTASE (COA-DEPENDENT)"/>
    <property type="match status" value="1"/>
</dbReference>
<dbReference type="PANTHER" id="PTHR43429">
    <property type="entry name" value="PYRIDINE NUCLEOTIDE-DISULFIDE OXIDOREDUCTASE DOMAIN-CONTAINING"/>
    <property type="match status" value="1"/>
</dbReference>
<dbReference type="Pfam" id="PF07992">
    <property type="entry name" value="Pyr_redox_2"/>
    <property type="match status" value="1"/>
</dbReference>
<dbReference type="Pfam" id="PF02852">
    <property type="entry name" value="Pyr_redox_dim"/>
    <property type="match status" value="1"/>
</dbReference>
<dbReference type="PRINTS" id="PR00368">
    <property type="entry name" value="FADPNR"/>
</dbReference>
<dbReference type="PRINTS" id="PR00411">
    <property type="entry name" value="PNDRDTASEI"/>
</dbReference>
<dbReference type="SUPFAM" id="SSF51905">
    <property type="entry name" value="FAD/NAD(P)-binding domain"/>
    <property type="match status" value="1"/>
</dbReference>
<dbReference type="SUPFAM" id="SSF55424">
    <property type="entry name" value="FAD/NAD-linked reductases, dimerisation (C-terminal) domain"/>
    <property type="match status" value="1"/>
</dbReference>
<proteinExistence type="inferred from homology"/>
<feature type="initiator methionine" description="Removed" evidence="1">
    <location>
        <position position="1"/>
    </location>
</feature>
<feature type="chain" id="PRO_0000184692" description="Coenzyme A disulfide reductase">
    <location>
        <begin position="2"/>
        <end position="438"/>
    </location>
</feature>
<feature type="active site" description="Nucleophile" evidence="2">
    <location>
        <position position="43"/>
    </location>
</feature>
<feature type="active site" description="Redox-active" evidence="2">
    <location>
        <position position="43"/>
    </location>
</feature>
<feature type="binding site" evidence="2">
    <location>
        <begin position="8"/>
        <end position="33"/>
    </location>
    <ligand>
        <name>FAD</name>
        <dbReference type="ChEBI" id="CHEBI:57692"/>
    </ligand>
</feature>
<feature type="binding site" evidence="2">
    <location>
        <position position="15"/>
    </location>
    <ligand>
        <name>substrate</name>
    </ligand>
</feature>
<feature type="binding site" evidence="2">
    <location>
        <position position="19"/>
    </location>
    <ligand>
        <name>substrate</name>
    </ligand>
</feature>
<feature type="binding site" evidence="2">
    <location>
        <position position="22"/>
    </location>
    <ligand>
        <name>substrate</name>
    </ligand>
</feature>
<feature type="binding site" evidence="2">
    <location>
        <position position="39"/>
    </location>
    <ligand>
        <name>substrate</name>
    </ligand>
</feature>
<feature type="binding site" evidence="2">
    <location>
        <position position="42"/>
    </location>
    <ligand>
        <name>substrate</name>
    </ligand>
</feature>
<feature type="binding site" evidence="2">
    <location>
        <position position="71"/>
    </location>
    <ligand>
        <name>substrate</name>
    </ligand>
</feature>
<feature type="binding site" evidence="2">
    <location>
        <begin position="151"/>
        <end position="166"/>
    </location>
    <ligand>
        <name>NADP(+)</name>
        <dbReference type="ChEBI" id="CHEBI:58349"/>
    </ligand>
</feature>
<feature type="binding site" evidence="2">
    <location>
        <begin position="267"/>
        <end position="277"/>
    </location>
    <ligand>
        <name>FAD</name>
        <dbReference type="ChEBI" id="CHEBI:57692"/>
    </ligand>
</feature>
<feature type="binding site" evidence="2">
    <location>
        <position position="299"/>
    </location>
    <ligand>
        <name>substrate</name>
    </ligand>
</feature>
<feature type="binding site" evidence="2">
    <location>
        <position position="419"/>
    </location>
    <ligand>
        <name>FAD</name>
        <dbReference type="ChEBI" id="CHEBI:57692"/>
    </ligand>
</feature>
<feature type="binding site" evidence="2">
    <location>
        <position position="427"/>
    </location>
    <ligand>
        <name>substrate</name>
    </ligand>
</feature>
<accession>Q6GIB7</accession>
<name>CDR_STAAR</name>